<reference key="1">
    <citation type="journal article" date="2009" name="PLoS Pathog.">
        <title>Molecular evolutionary consequences of niche restriction in Francisella tularensis, a facultative intracellular pathogen.</title>
        <authorList>
            <person name="Larsson P."/>
            <person name="Elfsmark D."/>
            <person name="Svensson K."/>
            <person name="Wikstroem P."/>
            <person name="Forsman M."/>
            <person name="Brettin T."/>
            <person name="Keim P."/>
            <person name="Johansson A."/>
        </authorList>
    </citation>
    <scope>NUCLEOTIDE SEQUENCE [LARGE SCALE GENOMIC DNA]</scope>
    <source>
        <strain>FSC147</strain>
    </source>
</reference>
<accession>B2SEQ2</accession>
<organism>
    <name type="scientific">Francisella tularensis subsp. mediasiatica (strain FSC147)</name>
    <dbReference type="NCBI Taxonomy" id="441952"/>
    <lineage>
        <taxon>Bacteria</taxon>
        <taxon>Pseudomonadati</taxon>
        <taxon>Pseudomonadota</taxon>
        <taxon>Gammaproteobacteria</taxon>
        <taxon>Thiotrichales</taxon>
        <taxon>Francisellaceae</taxon>
        <taxon>Francisella</taxon>
    </lineage>
</organism>
<evidence type="ECO:0000255" key="1">
    <source>
        <dbReference type="HAMAP-Rule" id="MF_01523"/>
    </source>
</evidence>
<keyword id="KW-0963">Cytoplasm</keyword>
<keyword id="KW-0489">Methyltransferase</keyword>
<keyword id="KW-0698">rRNA processing</keyword>
<keyword id="KW-0949">S-adenosyl-L-methionine</keyword>
<keyword id="KW-0808">Transferase</keyword>
<comment type="function">
    <text evidence="1">Specifically methylates the guanosine in position 1516 of 16S rRNA.</text>
</comment>
<comment type="catalytic activity">
    <reaction evidence="1">
        <text>guanosine(1516) in 16S rRNA + S-adenosyl-L-methionine = N(2)-methylguanosine(1516) in 16S rRNA + S-adenosyl-L-homocysteine + H(+)</text>
        <dbReference type="Rhea" id="RHEA:43220"/>
        <dbReference type="Rhea" id="RHEA-COMP:10412"/>
        <dbReference type="Rhea" id="RHEA-COMP:10413"/>
        <dbReference type="ChEBI" id="CHEBI:15378"/>
        <dbReference type="ChEBI" id="CHEBI:57856"/>
        <dbReference type="ChEBI" id="CHEBI:59789"/>
        <dbReference type="ChEBI" id="CHEBI:74269"/>
        <dbReference type="ChEBI" id="CHEBI:74481"/>
        <dbReference type="EC" id="2.1.1.242"/>
    </reaction>
</comment>
<comment type="subcellular location">
    <subcellularLocation>
        <location evidence="1">Cytoplasm</location>
    </subcellularLocation>
</comment>
<comment type="similarity">
    <text evidence="1">Belongs to the methyltransferase superfamily. RsmJ family.</text>
</comment>
<name>RSMJ_FRATM</name>
<protein>
    <recommendedName>
        <fullName evidence="1">Ribosomal RNA small subunit methyltransferase J</fullName>
        <ecNumber evidence="1">2.1.1.242</ecNumber>
    </recommendedName>
    <alternativeName>
        <fullName evidence="1">16S rRNA m2G1516 methyltransferase</fullName>
    </alternativeName>
    <alternativeName>
        <fullName evidence="1">rRNA (guanine-N(2)-)-methyltransferase</fullName>
    </alternativeName>
</protein>
<feature type="chain" id="PRO_1000198500" description="Ribosomal RNA small subunit methyltransferase J">
    <location>
        <begin position="1"/>
        <end position="241"/>
    </location>
</feature>
<feature type="binding site" evidence="1">
    <location>
        <begin position="94"/>
        <end position="95"/>
    </location>
    <ligand>
        <name>S-adenosyl-L-methionine</name>
        <dbReference type="ChEBI" id="CHEBI:59789"/>
    </ligand>
</feature>
<feature type="binding site" evidence="1">
    <location>
        <position position="163"/>
    </location>
    <ligand>
        <name>S-adenosyl-L-methionine</name>
        <dbReference type="ChEBI" id="CHEBI:59789"/>
    </ligand>
</feature>
<sequence>MQINISNLDVKNHLDKFIEDRLEYEFCKQDKYLYLENDNLKLHYNNKELFIDFNDSEILNRINPKTKKCSVVQAIEGRSKAKLTILDTTAGLGRDTFTLAARGHTLLTLEKDSYLYLLLKDALQRAQQINYLKEIANRITLINIDSNEYILTTDKSFDCVYVDPMFPPRKKSAKVKQGMQILHQVGFNDEVSNSNLLDNIIQTQISPKAVVKRPINAEFLSNKKPSSQLKGKTNRFDIYSL</sequence>
<proteinExistence type="inferred from homology"/>
<gene>
    <name evidence="1" type="primary">rsmJ</name>
    <name type="ordered locus">FTM_0393</name>
</gene>
<dbReference type="EC" id="2.1.1.242" evidence="1"/>
<dbReference type="EMBL" id="CP000915">
    <property type="protein sequence ID" value="ACD30428.1"/>
    <property type="molecule type" value="Genomic_DNA"/>
</dbReference>
<dbReference type="SMR" id="B2SEQ2"/>
<dbReference type="KEGG" id="ftm:FTM_0393"/>
<dbReference type="HOGENOM" id="CLU_076324_1_0_6"/>
<dbReference type="GO" id="GO:0005737">
    <property type="term" value="C:cytoplasm"/>
    <property type="evidence" value="ECO:0007669"/>
    <property type="project" value="UniProtKB-SubCell"/>
</dbReference>
<dbReference type="GO" id="GO:0008990">
    <property type="term" value="F:rRNA (guanine-N2-)-methyltransferase activity"/>
    <property type="evidence" value="ECO:0007669"/>
    <property type="project" value="UniProtKB-UniRule"/>
</dbReference>
<dbReference type="CDD" id="cd02440">
    <property type="entry name" value="AdoMet_MTases"/>
    <property type="match status" value="1"/>
</dbReference>
<dbReference type="Gene3D" id="3.40.50.150">
    <property type="entry name" value="Vaccinia Virus protein VP39"/>
    <property type="match status" value="1"/>
</dbReference>
<dbReference type="HAMAP" id="MF_01523">
    <property type="entry name" value="16SrRNA_methyltr_J"/>
    <property type="match status" value="1"/>
</dbReference>
<dbReference type="InterPro" id="IPR007536">
    <property type="entry name" value="16SrRNA_methylTrfase_J"/>
</dbReference>
<dbReference type="InterPro" id="IPR029063">
    <property type="entry name" value="SAM-dependent_MTases_sf"/>
</dbReference>
<dbReference type="PANTHER" id="PTHR36112">
    <property type="entry name" value="RIBOSOMAL RNA SMALL SUBUNIT METHYLTRANSFERASE J"/>
    <property type="match status" value="1"/>
</dbReference>
<dbReference type="PANTHER" id="PTHR36112:SF1">
    <property type="entry name" value="RIBOSOMAL RNA SMALL SUBUNIT METHYLTRANSFERASE J"/>
    <property type="match status" value="1"/>
</dbReference>
<dbReference type="Pfam" id="PF04445">
    <property type="entry name" value="SAM_MT"/>
    <property type="match status" value="1"/>
</dbReference>
<dbReference type="SUPFAM" id="SSF53335">
    <property type="entry name" value="S-adenosyl-L-methionine-dependent methyltransferases"/>
    <property type="match status" value="1"/>
</dbReference>